<dbReference type="EC" id="5.4.3.8" evidence="1"/>
<dbReference type="EMBL" id="CP001176">
    <property type="protein sequence ID" value="ACK59020.1"/>
    <property type="molecule type" value="Genomic_DNA"/>
</dbReference>
<dbReference type="SMR" id="B7H9S6"/>
<dbReference type="KEGG" id="bcb:BCB4264_A0536"/>
<dbReference type="HOGENOM" id="CLU_016922_1_5_9"/>
<dbReference type="UniPathway" id="UPA00251">
    <property type="reaction ID" value="UER00317"/>
</dbReference>
<dbReference type="Proteomes" id="UP000007096">
    <property type="component" value="Chromosome"/>
</dbReference>
<dbReference type="GO" id="GO:0005737">
    <property type="term" value="C:cytoplasm"/>
    <property type="evidence" value="ECO:0007669"/>
    <property type="project" value="UniProtKB-SubCell"/>
</dbReference>
<dbReference type="GO" id="GO:0042286">
    <property type="term" value="F:glutamate-1-semialdehyde 2,1-aminomutase activity"/>
    <property type="evidence" value="ECO:0007669"/>
    <property type="project" value="UniProtKB-UniRule"/>
</dbReference>
<dbReference type="GO" id="GO:0030170">
    <property type="term" value="F:pyridoxal phosphate binding"/>
    <property type="evidence" value="ECO:0007669"/>
    <property type="project" value="InterPro"/>
</dbReference>
<dbReference type="GO" id="GO:0008483">
    <property type="term" value="F:transaminase activity"/>
    <property type="evidence" value="ECO:0007669"/>
    <property type="project" value="InterPro"/>
</dbReference>
<dbReference type="GO" id="GO:0006782">
    <property type="term" value="P:protoporphyrinogen IX biosynthetic process"/>
    <property type="evidence" value="ECO:0007669"/>
    <property type="project" value="UniProtKB-UniRule"/>
</dbReference>
<dbReference type="CDD" id="cd00610">
    <property type="entry name" value="OAT_like"/>
    <property type="match status" value="1"/>
</dbReference>
<dbReference type="FunFam" id="3.40.640.10:FF:000021">
    <property type="entry name" value="Glutamate-1-semialdehyde 2,1-aminomutase"/>
    <property type="match status" value="1"/>
</dbReference>
<dbReference type="Gene3D" id="3.90.1150.10">
    <property type="entry name" value="Aspartate Aminotransferase, domain 1"/>
    <property type="match status" value="1"/>
</dbReference>
<dbReference type="Gene3D" id="3.40.640.10">
    <property type="entry name" value="Type I PLP-dependent aspartate aminotransferase-like (Major domain)"/>
    <property type="match status" value="1"/>
</dbReference>
<dbReference type="HAMAP" id="MF_00375">
    <property type="entry name" value="HemL_aminotrans_3"/>
    <property type="match status" value="1"/>
</dbReference>
<dbReference type="InterPro" id="IPR004639">
    <property type="entry name" value="4pyrrol_synth_GluAld_NH2Trfase"/>
</dbReference>
<dbReference type="InterPro" id="IPR005814">
    <property type="entry name" value="Aminotrans_3"/>
</dbReference>
<dbReference type="InterPro" id="IPR049704">
    <property type="entry name" value="Aminotrans_3_PPA_site"/>
</dbReference>
<dbReference type="InterPro" id="IPR015424">
    <property type="entry name" value="PyrdxlP-dep_Trfase"/>
</dbReference>
<dbReference type="InterPro" id="IPR015421">
    <property type="entry name" value="PyrdxlP-dep_Trfase_major"/>
</dbReference>
<dbReference type="InterPro" id="IPR015422">
    <property type="entry name" value="PyrdxlP-dep_Trfase_small"/>
</dbReference>
<dbReference type="NCBIfam" id="TIGR00713">
    <property type="entry name" value="hemL"/>
    <property type="match status" value="1"/>
</dbReference>
<dbReference type="NCBIfam" id="NF000818">
    <property type="entry name" value="PRK00062.1"/>
    <property type="match status" value="1"/>
</dbReference>
<dbReference type="NCBIfam" id="NF009055">
    <property type="entry name" value="PRK12389.1"/>
    <property type="match status" value="1"/>
</dbReference>
<dbReference type="PANTHER" id="PTHR43713">
    <property type="entry name" value="GLUTAMATE-1-SEMIALDEHYDE 2,1-AMINOMUTASE"/>
    <property type="match status" value="1"/>
</dbReference>
<dbReference type="PANTHER" id="PTHR43713:SF1">
    <property type="entry name" value="GLUTAMATE-1-SEMIALDEHYDE 2,1-AMINOMUTASE 2"/>
    <property type="match status" value="1"/>
</dbReference>
<dbReference type="Pfam" id="PF00202">
    <property type="entry name" value="Aminotran_3"/>
    <property type="match status" value="1"/>
</dbReference>
<dbReference type="SUPFAM" id="SSF53383">
    <property type="entry name" value="PLP-dependent transferases"/>
    <property type="match status" value="1"/>
</dbReference>
<dbReference type="PROSITE" id="PS00600">
    <property type="entry name" value="AA_TRANSFER_CLASS_3"/>
    <property type="match status" value="1"/>
</dbReference>
<name>GSA1_BACC4</name>
<reference key="1">
    <citation type="submission" date="2008-10" db="EMBL/GenBank/DDBJ databases">
        <title>Genome sequence of Bacillus cereus B4264.</title>
        <authorList>
            <person name="Dodson R.J."/>
            <person name="Durkin A.S."/>
            <person name="Rosovitz M.J."/>
            <person name="Rasko D.A."/>
            <person name="Hoffmaster A."/>
            <person name="Ravel J."/>
            <person name="Sutton G."/>
        </authorList>
    </citation>
    <scope>NUCLEOTIDE SEQUENCE [LARGE SCALE GENOMIC DNA]</scope>
    <source>
        <strain>B4264</strain>
    </source>
</reference>
<comment type="catalytic activity">
    <reaction evidence="1">
        <text>(S)-4-amino-5-oxopentanoate = 5-aminolevulinate</text>
        <dbReference type="Rhea" id="RHEA:14265"/>
        <dbReference type="ChEBI" id="CHEBI:57501"/>
        <dbReference type="ChEBI" id="CHEBI:356416"/>
        <dbReference type="EC" id="5.4.3.8"/>
    </reaction>
</comment>
<comment type="cofactor">
    <cofactor evidence="1">
        <name>pyridoxal 5'-phosphate</name>
        <dbReference type="ChEBI" id="CHEBI:597326"/>
    </cofactor>
</comment>
<comment type="pathway">
    <text evidence="1">Porphyrin-containing compound metabolism; protoporphyrin-IX biosynthesis; 5-aminolevulinate from L-glutamyl-tRNA(Glu): step 2/2.</text>
</comment>
<comment type="subunit">
    <text evidence="1">Homodimer.</text>
</comment>
<comment type="subcellular location">
    <subcellularLocation>
        <location evidence="1">Cytoplasm</location>
    </subcellularLocation>
</comment>
<comment type="similarity">
    <text evidence="1">Belongs to the class-III pyridoxal-phosphate-dependent aminotransferase family. HemL subfamily.</text>
</comment>
<sequence>MNFTKSEALHKEALEHIVGGVNSPSRSFKAVGGGAPVAMERGKGAYFWDVDGNKYIDYLAAYGPIITGHAHPHITKAITTAAENGVLYGTPTALEVKFAKMLKEAMPALDKVRFVNSGTEAVMTTIRVARAYTGRTKIMKFAGCYHGHSDLVLVAAGSGPSTLGTPDSAGVPQSIAQEVITVPFNNVETLKEALDKWGHEVAAILVEPIVGNFGIVEPKPGFLEKVNELVHEAGALVIYDEVITAFRFMYGGAQDLLGVTPDLTALGKVIGGGLPIGAYGGKKEIMEQVAPLGPAYQAGTMAGNPASMASGIACLEVLQQEGLYEKLDELGAMLEKGILEQAAKHNIDITLNRLKGALTVYFTTNTIEDYDAAQDTDGEMFGKFFKLMLQEGVNLAPSKYEAWFLTTEHTKEDIEYTIEAVGRAFAALADNK</sequence>
<feature type="chain" id="PRO_0000382269" description="Glutamate-1-semialdehyde 2,1-aminomutase 1">
    <location>
        <begin position="1"/>
        <end position="432"/>
    </location>
</feature>
<feature type="modified residue" description="N6-(pyridoxal phosphate)lysine" evidence="1">
    <location>
        <position position="268"/>
    </location>
</feature>
<protein>
    <recommendedName>
        <fullName evidence="1">Glutamate-1-semialdehyde 2,1-aminomutase 1</fullName>
        <shortName evidence="1">GSA 1</shortName>
        <ecNumber evidence="1">5.4.3.8</ecNumber>
    </recommendedName>
    <alternativeName>
        <fullName evidence="1">Glutamate-1-semialdehyde aminotransferase 1</fullName>
        <shortName evidence="1">GSA-AT 1</shortName>
    </alternativeName>
</protein>
<accession>B7H9S6</accession>
<keyword id="KW-0963">Cytoplasm</keyword>
<keyword id="KW-0413">Isomerase</keyword>
<keyword id="KW-0627">Porphyrin biosynthesis</keyword>
<keyword id="KW-0663">Pyridoxal phosphate</keyword>
<evidence type="ECO:0000255" key="1">
    <source>
        <dbReference type="HAMAP-Rule" id="MF_00375"/>
    </source>
</evidence>
<proteinExistence type="inferred from homology"/>
<organism>
    <name type="scientific">Bacillus cereus (strain B4264)</name>
    <dbReference type="NCBI Taxonomy" id="405532"/>
    <lineage>
        <taxon>Bacteria</taxon>
        <taxon>Bacillati</taxon>
        <taxon>Bacillota</taxon>
        <taxon>Bacilli</taxon>
        <taxon>Bacillales</taxon>
        <taxon>Bacillaceae</taxon>
        <taxon>Bacillus</taxon>
        <taxon>Bacillus cereus group</taxon>
    </lineage>
</organism>
<gene>
    <name evidence="1" type="primary">hemL1</name>
    <name type="ordered locus">BCB4264_A0536</name>
</gene>